<proteinExistence type="evidence at protein level"/>
<sequence>AGDPDAGQKVFLKCAACHKIGPGAKNGVGPSLNGVANRKAGQAEGFAYSDANKNSGLTWDEATFKEYITAPQKKVPGTKMTFPGLPNEADRDNIWAYLSQFKADGSK</sequence>
<reference key="1">
    <citation type="journal article" date="1979" name="Nature">
        <title>Cytochrome c2 sequence variation among the recognised species of purple nonsulphur photosynthetic bacteria.</title>
        <authorList>
            <person name="Ambler R.P."/>
            <person name="Daniel M."/>
            <person name="Hermoso J."/>
            <person name="Meyer T.E."/>
            <person name="Bartsch R.G."/>
            <person name="Kamen M.D."/>
        </authorList>
    </citation>
    <scope>PROTEIN SEQUENCE</scope>
    <source>
        <strain>ATCC 25092 / 7050 / DSM 137 / LMG 4304 / NCIB 11761</strain>
    </source>
</reference>
<keyword id="KW-0903">Direct protein sequencing</keyword>
<keyword id="KW-0249">Electron transport</keyword>
<keyword id="KW-0349">Heme</keyword>
<keyword id="KW-0408">Iron</keyword>
<keyword id="KW-0479">Metal-binding</keyword>
<keyword id="KW-0602">Photosynthesis</keyword>
<keyword id="KW-0813">Transport</keyword>
<evidence type="ECO:0000250" key="1"/>
<evidence type="ECO:0000255" key="2">
    <source>
        <dbReference type="PROSITE-ProRule" id="PRU00433"/>
    </source>
</evidence>
<evidence type="ECO:0000305" key="3"/>
<dbReference type="PIR" id="A00076">
    <property type="entry name" value="CCRF2A"/>
</dbReference>
<dbReference type="SMR" id="P00084"/>
<dbReference type="GO" id="GO:0009055">
    <property type="term" value="F:electron transfer activity"/>
    <property type="evidence" value="ECO:0007669"/>
    <property type="project" value="InterPro"/>
</dbReference>
<dbReference type="GO" id="GO:0020037">
    <property type="term" value="F:heme binding"/>
    <property type="evidence" value="ECO:0007669"/>
    <property type="project" value="InterPro"/>
</dbReference>
<dbReference type="GO" id="GO:0046872">
    <property type="term" value="F:metal ion binding"/>
    <property type="evidence" value="ECO:0007669"/>
    <property type="project" value="UniProtKB-KW"/>
</dbReference>
<dbReference type="GO" id="GO:0015979">
    <property type="term" value="P:photosynthesis"/>
    <property type="evidence" value="ECO:0007669"/>
    <property type="project" value="UniProtKB-KW"/>
</dbReference>
<dbReference type="Gene3D" id="1.10.760.10">
    <property type="entry name" value="Cytochrome c-like domain"/>
    <property type="match status" value="1"/>
</dbReference>
<dbReference type="InterPro" id="IPR009056">
    <property type="entry name" value="Cyt_c-like_dom"/>
</dbReference>
<dbReference type="InterPro" id="IPR036909">
    <property type="entry name" value="Cyt_c-like_dom_sf"/>
</dbReference>
<dbReference type="InterPro" id="IPR002327">
    <property type="entry name" value="Cyt_c_1A/1B"/>
</dbReference>
<dbReference type="PANTHER" id="PTHR11961">
    <property type="entry name" value="CYTOCHROME C"/>
    <property type="match status" value="1"/>
</dbReference>
<dbReference type="Pfam" id="PF00034">
    <property type="entry name" value="Cytochrom_C"/>
    <property type="match status" value="1"/>
</dbReference>
<dbReference type="PRINTS" id="PR00604">
    <property type="entry name" value="CYTCHRMECIAB"/>
</dbReference>
<dbReference type="SUPFAM" id="SSF46626">
    <property type="entry name" value="Cytochrome c"/>
    <property type="match status" value="1"/>
</dbReference>
<dbReference type="PROSITE" id="PS51007">
    <property type="entry name" value="CYTC"/>
    <property type="match status" value="1"/>
</dbReference>
<name>CYC2_RHOAC</name>
<accession>P00084</accession>
<protein>
    <recommendedName>
        <fullName>Cytochrome c2</fullName>
    </recommendedName>
</protein>
<comment type="function">
    <text>Cytochrome c2 is found mainly in purple, non-sulfur, photosynthetic bacteria where it functions as the electron donor to the oxidized bacteriochlorophyll in the photophosphorylation pathway. However, it may also have a role in the respiratory chain and is found in some non-photosynthetic bacteria.</text>
</comment>
<comment type="PTM">
    <text evidence="1">Binds 1 heme c group covalently per subunit.</text>
</comment>
<comment type="similarity">
    <text evidence="3">Belongs to the cytochrome c family.</text>
</comment>
<feature type="chain" id="PRO_0000108340" description="Cytochrome c2">
    <location>
        <begin position="1"/>
        <end position="107"/>
    </location>
</feature>
<feature type="binding site" description="covalent" evidence="2">
    <location>
        <position position="14"/>
    </location>
    <ligand>
        <name>heme c</name>
        <dbReference type="ChEBI" id="CHEBI:61717"/>
    </ligand>
</feature>
<feature type="binding site" description="covalent" evidence="2">
    <location>
        <position position="17"/>
    </location>
    <ligand>
        <name>heme c</name>
        <dbReference type="ChEBI" id="CHEBI:61717"/>
    </ligand>
</feature>
<feature type="binding site" description="axial binding residue" evidence="2">
    <location>
        <position position="18"/>
    </location>
    <ligand>
        <name>heme c</name>
        <dbReference type="ChEBI" id="CHEBI:61717"/>
    </ligand>
    <ligandPart>
        <name>Fe</name>
        <dbReference type="ChEBI" id="CHEBI:18248"/>
    </ligandPart>
</feature>
<feature type="binding site" description="axial binding residue" evidence="2">
    <location>
        <position position="80"/>
    </location>
    <ligand>
        <name>heme c</name>
        <dbReference type="ChEBI" id="CHEBI:61717"/>
    </ligand>
    <ligandPart>
        <name>Fe</name>
        <dbReference type="ChEBI" id="CHEBI:18248"/>
    </ligandPart>
</feature>
<organism>
    <name type="scientific">Rhodoblastus acidophilus</name>
    <name type="common">Rhodopseudomonas acidophila</name>
    <dbReference type="NCBI Taxonomy" id="1074"/>
    <lineage>
        <taxon>Bacteria</taxon>
        <taxon>Pseudomonadati</taxon>
        <taxon>Pseudomonadota</taxon>
        <taxon>Alphaproteobacteria</taxon>
        <taxon>Hyphomicrobiales</taxon>
        <taxon>Rhodoblastaceae</taxon>
        <taxon>Rhodoblastus</taxon>
    </lineage>
</organism>